<reference key="1">
    <citation type="journal article" date="2005" name="J. Bacteriol.">
        <title>Insights on evolution of virulence and resistance from the complete genome analysis of an early methicillin-resistant Staphylococcus aureus strain and a biofilm-producing methicillin-resistant Staphylococcus epidermidis strain.</title>
        <authorList>
            <person name="Gill S.R."/>
            <person name="Fouts D.E."/>
            <person name="Archer G.L."/>
            <person name="Mongodin E.F."/>
            <person name="DeBoy R.T."/>
            <person name="Ravel J."/>
            <person name="Paulsen I.T."/>
            <person name="Kolonay J.F."/>
            <person name="Brinkac L.M."/>
            <person name="Beanan M.J."/>
            <person name="Dodson R.J."/>
            <person name="Daugherty S.C."/>
            <person name="Madupu R."/>
            <person name="Angiuoli S.V."/>
            <person name="Durkin A.S."/>
            <person name="Haft D.H."/>
            <person name="Vamathevan J.J."/>
            <person name="Khouri H."/>
            <person name="Utterback T.R."/>
            <person name="Lee C."/>
            <person name="Dimitrov G."/>
            <person name="Jiang L."/>
            <person name="Qin H."/>
            <person name="Weidman J."/>
            <person name="Tran K."/>
            <person name="Kang K.H."/>
            <person name="Hance I.R."/>
            <person name="Nelson K.E."/>
            <person name="Fraser C.M."/>
        </authorList>
    </citation>
    <scope>NUCLEOTIDE SEQUENCE [LARGE SCALE GENOMIC DNA]</scope>
    <source>
        <strain>ATCC 35984 / DSM 28319 / BCRC 17069 / CCUG 31568 / BM 3577 / RP62A</strain>
    </source>
</reference>
<organism>
    <name type="scientific">Staphylococcus epidermidis (strain ATCC 35984 / DSM 28319 / BCRC 17069 / CCUG 31568 / BM 3577 / RP62A)</name>
    <dbReference type="NCBI Taxonomy" id="176279"/>
    <lineage>
        <taxon>Bacteria</taxon>
        <taxon>Bacillati</taxon>
        <taxon>Bacillota</taxon>
        <taxon>Bacilli</taxon>
        <taxon>Bacillales</taxon>
        <taxon>Staphylococcaceae</taxon>
        <taxon>Staphylococcus</taxon>
    </lineage>
</organism>
<protein>
    <recommendedName>
        <fullName evidence="1">Proline--tRNA ligase</fullName>
        <ecNumber evidence="1">6.1.1.15</ecNumber>
    </recommendedName>
    <alternativeName>
        <fullName evidence="1">Prolyl-tRNA synthetase</fullName>
        <shortName evidence="1">ProRS</shortName>
    </alternativeName>
</protein>
<feature type="chain" id="PRO_0000139345" description="Proline--tRNA ligase">
    <location>
        <begin position="1"/>
        <end position="567"/>
    </location>
</feature>
<sequence>MKQSKVFIPTMREVPAEAEALSHRLLLKAGLIKQSTSGIYSYLPLATRVLNNISKIIREEMESIDAVEILMPALQQAELWEESGRWSAYGPELMRLKDRNGREFALGPTHEEVVTSLVRDELKSYKQLPLTLFQIQSKYRDEKRPRFGLLRGREFLMKDAYSFHSDEASLDATYQDMYQAYSRIFKRVGINARPVVADSGAIGGSHTHEFMALSEIGEDTIVYSNESDYAANIEKAEVVYHPSHKHSALAELTKVETPNVKTAQEVAEYLKRPLDEIVKTMIFKIDGEFIMFLVRGHHELNEVKLKSYFGTEHVEMATPDEIVNLVDANPGSLGPIFDKDIKIYADNYLQDLNNFVVGANEDHYHYINVNIGRDFDVTEYGDFRFITQGEMLSDGSGVAQFAEGIEVGQVFKLGTKYSESMNATFLDNQGKAQPLIMGCYGIGVSRTLSAIVEQNNDENGIIWPKSVTPFDIHLITINPKKDDQRTLGDQLYQKLMDSYDVLYDDRKERAGVKFNDSDLIGLPVRVVVGKRAEEGIVEVKQRINGLSEEVQIDELEYYLQELFKNIK</sequence>
<comment type="function">
    <text evidence="1">Catalyzes the attachment of proline to tRNA(Pro) in a two-step reaction: proline is first activated by ATP to form Pro-AMP and then transferred to the acceptor end of tRNA(Pro). As ProRS can inadvertently accommodate and process non-cognate amino acids such as alanine and cysteine, to avoid such errors it has two additional distinct editing activities against alanine. One activity is designated as 'pretransfer' editing and involves the tRNA(Pro)-independent hydrolysis of activated Ala-AMP. The other activity is designated 'posttransfer' editing and involves deacylation of mischarged Ala-tRNA(Pro). The misacylated Cys-tRNA(Pro) is not edited by ProRS.</text>
</comment>
<comment type="catalytic activity">
    <reaction evidence="1">
        <text>tRNA(Pro) + L-proline + ATP = L-prolyl-tRNA(Pro) + AMP + diphosphate</text>
        <dbReference type="Rhea" id="RHEA:14305"/>
        <dbReference type="Rhea" id="RHEA-COMP:9700"/>
        <dbReference type="Rhea" id="RHEA-COMP:9702"/>
        <dbReference type="ChEBI" id="CHEBI:30616"/>
        <dbReference type="ChEBI" id="CHEBI:33019"/>
        <dbReference type="ChEBI" id="CHEBI:60039"/>
        <dbReference type="ChEBI" id="CHEBI:78442"/>
        <dbReference type="ChEBI" id="CHEBI:78532"/>
        <dbReference type="ChEBI" id="CHEBI:456215"/>
        <dbReference type="EC" id="6.1.1.15"/>
    </reaction>
</comment>
<comment type="subunit">
    <text evidence="1">Homodimer.</text>
</comment>
<comment type="subcellular location">
    <subcellularLocation>
        <location evidence="1">Cytoplasm</location>
    </subcellularLocation>
</comment>
<comment type="domain">
    <text evidence="1">Consists of three domains: the N-terminal catalytic domain, the editing domain and the C-terminal anticodon-binding domain.</text>
</comment>
<comment type="similarity">
    <text evidence="1">Belongs to the class-II aminoacyl-tRNA synthetase family. ProS type 1 subfamily.</text>
</comment>
<gene>
    <name evidence="1" type="primary">proS</name>
    <name type="ordered locus">SERP0830</name>
</gene>
<dbReference type="EC" id="6.1.1.15" evidence="1"/>
<dbReference type="EMBL" id="CP000029">
    <property type="protein sequence ID" value="AAW54191.1"/>
    <property type="molecule type" value="Genomic_DNA"/>
</dbReference>
<dbReference type="RefSeq" id="WP_001829513.1">
    <property type="nucleotide sequence ID" value="NC_002976.3"/>
</dbReference>
<dbReference type="SMR" id="Q5HPS8"/>
<dbReference type="STRING" id="176279.SERP0830"/>
<dbReference type="KEGG" id="ser:SERP0830"/>
<dbReference type="eggNOG" id="COG0442">
    <property type="taxonomic scope" value="Bacteria"/>
</dbReference>
<dbReference type="HOGENOM" id="CLU_016739_0_0_9"/>
<dbReference type="Proteomes" id="UP000000531">
    <property type="component" value="Chromosome"/>
</dbReference>
<dbReference type="GO" id="GO:0005829">
    <property type="term" value="C:cytosol"/>
    <property type="evidence" value="ECO:0007669"/>
    <property type="project" value="TreeGrafter"/>
</dbReference>
<dbReference type="GO" id="GO:0002161">
    <property type="term" value="F:aminoacyl-tRNA deacylase activity"/>
    <property type="evidence" value="ECO:0007669"/>
    <property type="project" value="InterPro"/>
</dbReference>
<dbReference type="GO" id="GO:0005524">
    <property type="term" value="F:ATP binding"/>
    <property type="evidence" value="ECO:0007669"/>
    <property type="project" value="UniProtKB-UniRule"/>
</dbReference>
<dbReference type="GO" id="GO:0140096">
    <property type="term" value="F:catalytic activity, acting on a protein"/>
    <property type="evidence" value="ECO:0007669"/>
    <property type="project" value="UniProtKB-ARBA"/>
</dbReference>
<dbReference type="GO" id="GO:0004827">
    <property type="term" value="F:proline-tRNA ligase activity"/>
    <property type="evidence" value="ECO:0007669"/>
    <property type="project" value="UniProtKB-UniRule"/>
</dbReference>
<dbReference type="GO" id="GO:0016740">
    <property type="term" value="F:transferase activity"/>
    <property type="evidence" value="ECO:0007669"/>
    <property type="project" value="UniProtKB-ARBA"/>
</dbReference>
<dbReference type="GO" id="GO:0006433">
    <property type="term" value="P:prolyl-tRNA aminoacylation"/>
    <property type="evidence" value="ECO:0007669"/>
    <property type="project" value="UniProtKB-UniRule"/>
</dbReference>
<dbReference type="CDD" id="cd04334">
    <property type="entry name" value="ProRS-INS"/>
    <property type="match status" value="1"/>
</dbReference>
<dbReference type="CDD" id="cd00861">
    <property type="entry name" value="ProRS_anticodon_short"/>
    <property type="match status" value="1"/>
</dbReference>
<dbReference type="CDD" id="cd00779">
    <property type="entry name" value="ProRS_core_prok"/>
    <property type="match status" value="1"/>
</dbReference>
<dbReference type="FunFam" id="3.30.930.10:FF:000043">
    <property type="entry name" value="Proline--tRNA ligase"/>
    <property type="match status" value="1"/>
</dbReference>
<dbReference type="FunFam" id="3.40.50.800:FF:000011">
    <property type="entry name" value="Proline--tRNA ligase"/>
    <property type="match status" value="1"/>
</dbReference>
<dbReference type="Gene3D" id="3.40.50.800">
    <property type="entry name" value="Anticodon-binding domain"/>
    <property type="match status" value="1"/>
</dbReference>
<dbReference type="Gene3D" id="3.30.930.10">
    <property type="entry name" value="Bira Bifunctional Protein, Domain 2"/>
    <property type="match status" value="2"/>
</dbReference>
<dbReference type="Gene3D" id="3.90.960.10">
    <property type="entry name" value="YbaK/aminoacyl-tRNA synthetase-associated domain"/>
    <property type="match status" value="1"/>
</dbReference>
<dbReference type="HAMAP" id="MF_01569">
    <property type="entry name" value="Pro_tRNA_synth_type1"/>
    <property type="match status" value="1"/>
</dbReference>
<dbReference type="InterPro" id="IPR002314">
    <property type="entry name" value="aa-tRNA-synt_IIb"/>
</dbReference>
<dbReference type="InterPro" id="IPR006195">
    <property type="entry name" value="aa-tRNA-synth_II"/>
</dbReference>
<dbReference type="InterPro" id="IPR045864">
    <property type="entry name" value="aa-tRNA-synth_II/BPL/LPL"/>
</dbReference>
<dbReference type="InterPro" id="IPR004154">
    <property type="entry name" value="Anticodon-bd"/>
</dbReference>
<dbReference type="InterPro" id="IPR036621">
    <property type="entry name" value="Anticodon-bd_dom_sf"/>
</dbReference>
<dbReference type="InterPro" id="IPR002316">
    <property type="entry name" value="Pro-tRNA-ligase_IIa"/>
</dbReference>
<dbReference type="InterPro" id="IPR004500">
    <property type="entry name" value="Pro-tRNA-synth_IIa_bac-type"/>
</dbReference>
<dbReference type="InterPro" id="IPR023717">
    <property type="entry name" value="Pro-tRNA-Synthase_IIa_type1"/>
</dbReference>
<dbReference type="InterPro" id="IPR050062">
    <property type="entry name" value="Pro-tRNA_synthetase"/>
</dbReference>
<dbReference type="InterPro" id="IPR044140">
    <property type="entry name" value="ProRS_anticodon_short"/>
</dbReference>
<dbReference type="InterPro" id="IPR033730">
    <property type="entry name" value="ProRS_core_prok"/>
</dbReference>
<dbReference type="InterPro" id="IPR036754">
    <property type="entry name" value="YbaK/aa-tRNA-synt-asso_dom_sf"/>
</dbReference>
<dbReference type="InterPro" id="IPR007214">
    <property type="entry name" value="YbaK/aa-tRNA-synth-assoc-dom"/>
</dbReference>
<dbReference type="NCBIfam" id="NF006625">
    <property type="entry name" value="PRK09194.1"/>
    <property type="match status" value="1"/>
</dbReference>
<dbReference type="NCBIfam" id="TIGR00409">
    <property type="entry name" value="proS_fam_II"/>
    <property type="match status" value="1"/>
</dbReference>
<dbReference type="PANTHER" id="PTHR42753">
    <property type="entry name" value="MITOCHONDRIAL RIBOSOME PROTEIN L39/PROLYL-TRNA LIGASE FAMILY MEMBER"/>
    <property type="match status" value="1"/>
</dbReference>
<dbReference type="PANTHER" id="PTHR42753:SF2">
    <property type="entry name" value="PROLINE--TRNA LIGASE"/>
    <property type="match status" value="1"/>
</dbReference>
<dbReference type="Pfam" id="PF03129">
    <property type="entry name" value="HGTP_anticodon"/>
    <property type="match status" value="1"/>
</dbReference>
<dbReference type="Pfam" id="PF00587">
    <property type="entry name" value="tRNA-synt_2b"/>
    <property type="match status" value="1"/>
</dbReference>
<dbReference type="Pfam" id="PF04073">
    <property type="entry name" value="tRNA_edit"/>
    <property type="match status" value="1"/>
</dbReference>
<dbReference type="PRINTS" id="PR01046">
    <property type="entry name" value="TRNASYNTHPRO"/>
</dbReference>
<dbReference type="SUPFAM" id="SSF52954">
    <property type="entry name" value="Class II aaRS ABD-related"/>
    <property type="match status" value="1"/>
</dbReference>
<dbReference type="SUPFAM" id="SSF55681">
    <property type="entry name" value="Class II aaRS and biotin synthetases"/>
    <property type="match status" value="1"/>
</dbReference>
<dbReference type="SUPFAM" id="SSF55826">
    <property type="entry name" value="YbaK/ProRS associated domain"/>
    <property type="match status" value="1"/>
</dbReference>
<dbReference type="PROSITE" id="PS50862">
    <property type="entry name" value="AA_TRNA_LIGASE_II"/>
    <property type="match status" value="1"/>
</dbReference>
<keyword id="KW-0030">Aminoacyl-tRNA synthetase</keyword>
<keyword id="KW-0067">ATP-binding</keyword>
<keyword id="KW-0963">Cytoplasm</keyword>
<keyword id="KW-0436">Ligase</keyword>
<keyword id="KW-0547">Nucleotide-binding</keyword>
<keyword id="KW-0648">Protein biosynthesis</keyword>
<keyword id="KW-1185">Reference proteome</keyword>
<accession>Q5HPS8</accession>
<proteinExistence type="inferred from homology"/>
<evidence type="ECO:0000255" key="1">
    <source>
        <dbReference type="HAMAP-Rule" id="MF_01569"/>
    </source>
</evidence>
<name>SYP_STAEQ</name>